<dbReference type="EMBL" id="CU329672">
    <property type="protein sequence ID" value="CAA22823.1"/>
    <property type="molecule type" value="Genomic_DNA"/>
</dbReference>
<dbReference type="PIR" id="T40921">
    <property type="entry name" value="T40921"/>
</dbReference>
<dbReference type="RefSeq" id="NP_588166.1">
    <property type="nucleotide sequence ID" value="NM_001023155.2"/>
</dbReference>
<dbReference type="SMR" id="O94519"/>
<dbReference type="BioGRID" id="275295">
    <property type="interactions" value="30"/>
</dbReference>
<dbReference type="FunCoup" id="O94519">
    <property type="interactions" value="355"/>
</dbReference>
<dbReference type="STRING" id="284812.O94519"/>
<dbReference type="iPTMnet" id="O94519"/>
<dbReference type="PaxDb" id="4896-SPCC1281.02c.1"/>
<dbReference type="EnsemblFungi" id="SPCC1281.02c.1">
    <property type="protein sequence ID" value="SPCC1281.02c.1:pep"/>
    <property type="gene ID" value="SPCC1281.02c"/>
</dbReference>
<dbReference type="GeneID" id="2538711"/>
<dbReference type="KEGG" id="spo:2538711"/>
<dbReference type="PomBase" id="SPCC1281.02c">
    <property type="gene designation" value="spf30"/>
</dbReference>
<dbReference type="VEuPathDB" id="FungiDB:SPCC1281.02c"/>
<dbReference type="eggNOG" id="KOG3026">
    <property type="taxonomic scope" value="Eukaryota"/>
</dbReference>
<dbReference type="HOGENOM" id="CLU_069491_1_0_1"/>
<dbReference type="InParanoid" id="O94519"/>
<dbReference type="OMA" id="CEAQWTD"/>
<dbReference type="PhylomeDB" id="O94519"/>
<dbReference type="Reactome" id="R-SPO-72163">
    <property type="pathway name" value="mRNA Splicing - Major Pathway"/>
</dbReference>
<dbReference type="PRO" id="PR:O94519"/>
<dbReference type="Proteomes" id="UP000002485">
    <property type="component" value="Chromosome III"/>
</dbReference>
<dbReference type="GO" id="GO:0005634">
    <property type="term" value="C:nucleus"/>
    <property type="evidence" value="ECO:0007005"/>
    <property type="project" value="PomBase"/>
</dbReference>
<dbReference type="GO" id="GO:0005681">
    <property type="term" value="C:spliceosomal complex"/>
    <property type="evidence" value="ECO:0007669"/>
    <property type="project" value="UniProtKB-KW"/>
</dbReference>
<dbReference type="GO" id="GO:0000244">
    <property type="term" value="P:spliceosomal tri-snRNP complex assembly"/>
    <property type="evidence" value="ECO:0000250"/>
    <property type="project" value="PomBase"/>
</dbReference>
<dbReference type="CDD" id="cd20446">
    <property type="entry name" value="Tudor_SpSPF30-like"/>
    <property type="match status" value="1"/>
</dbReference>
<dbReference type="Gene3D" id="2.30.30.140">
    <property type="match status" value="1"/>
</dbReference>
<dbReference type="InterPro" id="IPR041297">
    <property type="entry name" value="Crb2_Tudor"/>
</dbReference>
<dbReference type="InterPro" id="IPR002999">
    <property type="entry name" value="Tudor"/>
</dbReference>
<dbReference type="PANTHER" id="PTHR46297">
    <property type="entry name" value="ZINC FINGER CCCH-TYPE WITH G PATCH DOMAIN-CONTAINING PROTEIN"/>
    <property type="match status" value="1"/>
</dbReference>
<dbReference type="Pfam" id="PF18115">
    <property type="entry name" value="Tudor_3"/>
    <property type="match status" value="1"/>
</dbReference>
<dbReference type="SMART" id="SM00333">
    <property type="entry name" value="TUDOR"/>
    <property type="match status" value="1"/>
</dbReference>
<dbReference type="SUPFAM" id="SSF63748">
    <property type="entry name" value="Tudor/PWWP/MBT"/>
    <property type="match status" value="1"/>
</dbReference>
<keyword id="KW-0507">mRNA processing</keyword>
<keyword id="KW-0508">mRNA splicing</keyword>
<keyword id="KW-0539">Nucleus</keyword>
<keyword id="KW-0597">Phosphoprotein</keyword>
<keyword id="KW-1185">Reference proteome</keyword>
<keyword id="KW-0747">Spliceosome</keyword>
<reference key="1">
    <citation type="journal article" date="2002" name="Nature">
        <title>The genome sequence of Schizosaccharomyces pombe.</title>
        <authorList>
            <person name="Wood V."/>
            <person name="Gwilliam R."/>
            <person name="Rajandream M.A."/>
            <person name="Lyne M.H."/>
            <person name="Lyne R."/>
            <person name="Stewart A."/>
            <person name="Sgouros J.G."/>
            <person name="Peat N."/>
            <person name="Hayles J."/>
            <person name="Baker S.G."/>
            <person name="Basham D."/>
            <person name="Bowman S."/>
            <person name="Brooks K."/>
            <person name="Brown D."/>
            <person name="Brown S."/>
            <person name="Chillingworth T."/>
            <person name="Churcher C.M."/>
            <person name="Collins M."/>
            <person name="Connor R."/>
            <person name="Cronin A."/>
            <person name="Davis P."/>
            <person name="Feltwell T."/>
            <person name="Fraser A."/>
            <person name="Gentles S."/>
            <person name="Goble A."/>
            <person name="Hamlin N."/>
            <person name="Harris D.E."/>
            <person name="Hidalgo J."/>
            <person name="Hodgson G."/>
            <person name="Holroyd S."/>
            <person name="Hornsby T."/>
            <person name="Howarth S."/>
            <person name="Huckle E.J."/>
            <person name="Hunt S."/>
            <person name="Jagels K."/>
            <person name="James K.D."/>
            <person name="Jones L."/>
            <person name="Jones M."/>
            <person name="Leather S."/>
            <person name="McDonald S."/>
            <person name="McLean J."/>
            <person name="Mooney P."/>
            <person name="Moule S."/>
            <person name="Mungall K.L."/>
            <person name="Murphy L.D."/>
            <person name="Niblett D."/>
            <person name="Odell C."/>
            <person name="Oliver K."/>
            <person name="O'Neil S."/>
            <person name="Pearson D."/>
            <person name="Quail M.A."/>
            <person name="Rabbinowitsch E."/>
            <person name="Rutherford K.M."/>
            <person name="Rutter S."/>
            <person name="Saunders D."/>
            <person name="Seeger K."/>
            <person name="Sharp S."/>
            <person name="Skelton J."/>
            <person name="Simmonds M.N."/>
            <person name="Squares R."/>
            <person name="Squares S."/>
            <person name="Stevens K."/>
            <person name="Taylor K."/>
            <person name="Taylor R.G."/>
            <person name="Tivey A."/>
            <person name="Walsh S.V."/>
            <person name="Warren T."/>
            <person name="Whitehead S."/>
            <person name="Woodward J.R."/>
            <person name="Volckaert G."/>
            <person name="Aert R."/>
            <person name="Robben J."/>
            <person name="Grymonprez B."/>
            <person name="Weltjens I."/>
            <person name="Vanstreels E."/>
            <person name="Rieger M."/>
            <person name="Schaefer M."/>
            <person name="Mueller-Auer S."/>
            <person name="Gabel C."/>
            <person name="Fuchs M."/>
            <person name="Duesterhoeft A."/>
            <person name="Fritzc C."/>
            <person name="Holzer E."/>
            <person name="Moestl D."/>
            <person name="Hilbert H."/>
            <person name="Borzym K."/>
            <person name="Langer I."/>
            <person name="Beck A."/>
            <person name="Lehrach H."/>
            <person name="Reinhardt R."/>
            <person name="Pohl T.M."/>
            <person name="Eger P."/>
            <person name="Zimmermann W."/>
            <person name="Wedler H."/>
            <person name="Wambutt R."/>
            <person name="Purnelle B."/>
            <person name="Goffeau A."/>
            <person name="Cadieu E."/>
            <person name="Dreano S."/>
            <person name="Gloux S."/>
            <person name="Lelaure V."/>
            <person name="Mottier S."/>
            <person name="Galibert F."/>
            <person name="Aves S.J."/>
            <person name="Xiang Z."/>
            <person name="Hunt C."/>
            <person name="Moore K."/>
            <person name="Hurst S.M."/>
            <person name="Lucas M."/>
            <person name="Rochet M."/>
            <person name="Gaillardin C."/>
            <person name="Tallada V.A."/>
            <person name="Garzon A."/>
            <person name="Thode G."/>
            <person name="Daga R.R."/>
            <person name="Cruzado L."/>
            <person name="Jimenez J."/>
            <person name="Sanchez M."/>
            <person name="del Rey F."/>
            <person name="Benito J."/>
            <person name="Dominguez A."/>
            <person name="Revuelta J.L."/>
            <person name="Moreno S."/>
            <person name="Armstrong J."/>
            <person name="Forsburg S.L."/>
            <person name="Cerutti L."/>
            <person name="Lowe T."/>
            <person name="McCombie W.R."/>
            <person name="Paulsen I."/>
            <person name="Potashkin J."/>
            <person name="Shpakovski G.V."/>
            <person name="Ussery D."/>
            <person name="Barrell B.G."/>
            <person name="Nurse P."/>
        </authorList>
    </citation>
    <scope>NUCLEOTIDE SEQUENCE [LARGE SCALE GENOMIC DNA]</scope>
    <source>
        <strain>972 / ATCC 24843</strain>
    </source>
</reference>
<reference key="2">
    <citation type="journal article" date="2006" name="Nat. Biotechnol.">
        <title>ORFeome cloning and global analysis of protein localization in the fission yeast Schizosaccharomyces pombe.</title>
        <authorList>
            <person name="Matsuyama A."/>
            <person name="Arai R."/>
            <person name="Yashiroda Y."/>
            <person name="Shirai A."/>
            <person name="Kamata A."/>
            <person name="Sekido S."/>
            <person name="Kobayashi Y."/>
            <person name="Hashimoto A."/>
            <person name="Hamamoto M."/>
            <person name="Hiraoka Y."/>
            <person name="Horinouchi S."/>
            <person name="Yoshida M."/>
        </authorList>
    </citation>
    <scope>SUBCELLULAR LOCATION [LARGE SCALE ANALYSIS]</scope>
</reference>
<reference key="3">
    <citation type="journal article" date="2008" name="J. Proteome Res.">
        <title>Phosphoproteome analysis of fission yeast.</title>
        <authorList>
            <person name="Wilson-Grady J.T."/>
            <person name="Villen J."/>
            <person name="Gygi S.P."/>
        </authorList>
    </citation>
    <scope>PHOSPHORYLATION [LARGE SCALE ANALYSIS] AT SER-173</scope>
    <scope>IDENTIFICATION BY MASS SPECTROMETRY</scope>
</reference>
<accession>O94519</accession>
<gene>
    <name type="primary">spf30</name>
    <name type="ORF">SPCC1281.02c</name>
</gene>
<organism>
    <name type="scientific">Schizosaccharomyces pombe (strain 972 / ATCC 24843)</name>
    <name type="common">Fission yeast</name>
    <dbReference type="NCBI Taxonomy" id="284812"/>
    <lineage>
        <taxon>Eukaryota</taxon>
        <taxon>Fungi</taxon>
        <taxon>Dikarya</taxon>
        <taxon>Ascomycota</taxon>
        <taxon>Taphrinomycotina</taxon>
        <taxon>Schizosaccharomycetes</taxon>
        <taxon>Schizosaccharomycetales</taxon>
        <taxon>Schizosaccharomycetaceae</taxon>
        <taxon>Schizosaccharomyces</taxon>
    </lineage>
</organism>
<evidence type="ECO:0000250" key="1">
    <source>
        <dbReference type="UniProtKB" id="O75940"/>
    </source>
</evidence>
<evidence type="ECO:0000256" key="2">
    <source>
        <dbReference type="SAM" id="MobiDB-lite"/>
    </source>
</evidence>
<evidence type="ECO:0000269" key="3">
    <source>
    </source>
</evidence>
<evidence type="ECO:0000269" key="4">
    <source>
    </source>
</evidence>
<evidence type="ECO:0000305" key="5"/>
<proteinExistence type="evidence at protein level"/>
<protein>
    <recommendedName>
        <fullName>Splicing factor spf30</fullName>
    </recommendedName>
    <alternativeName>
        <fullName>Survival of motor neuron-related-splicing factor 30 homolog</fullName>
    </alternativeName>
</protein>
<sequence>MEKELEEYKSQLALVQISLQKTPQNEELQLLENDLKELISLTENLLQESVENDKNTFQNSQNGVAGFNTSKPVHIDFTPGNLVMARWVSGDYLFYPSRITAVSGFGANKKYTVQFLDYPDIETVSLKHIKAMPEEKRQEIEGNKEILKKSTTIRSTPVREPTKAISVASMSTSPSNYASRASSPDMKSSAAVTANVSPIQNVAQHVSTLPKISPIPPSNPPPVPSVSYSQKQQKQLKPKAALEASQNSWKQFAARGVKTGRVGKRKKIGESSIFKSTEDFPGRTNPKNFGNVARSGHREKHIYNYREDEDS</sequence>
<comment type="function">
    <text evidence="1">Involved in spliceosome assembly.</text>
</comment>
<comment type="subunit">
    <text evidence="1">Associates with spliceosomes (By similarity).</text>
</comment>
<comment type="subcellular location">
    <subcellularLocation>
        <location evidence="3">Nucleus</location>
    </subcellularLocation>
</comment>
<comment type="domain">
    <text evidence="1">The Tudor domain mediates association with dimethylarginines, which are common in snRNP proteins.</text>
</comment>
<comment type="similarity">
    <text evidence="5">Belongs to the SMN family.</text>
</comment>
<feature type="chain" id="PRO_0000290648" description="Splicing factor spf30">
    <location>
        <begin position="1"/>
        <end position="311"/>
    </location>
</feature>
<feature type="domain" description="Tudor">
    <location>
        <begin position="76"/>
        <end position="139"/>
    </location>
</feature>
<feature type="region of interest" description="Disordered" evidence="2">
    <location>
        <begin position="154"/>
        <end position="183"/>
    </location>
</feature>
<feature type="region of interest" description="Disordered" evidence="2">
    <location>
        <begin position="276"/>
        <end position="311"/>
    </location>
</feature>
<feature type="compositionally biased region" description="Polar residues" evidence="2">
    <location>
        <begin position="168"/>
        <end position="183"/>
    </location>
</feature>
<feature type="compositionally biased region" description="Basic and acidic residues" evidence="2">
    <location>
        <begin position="301"/>
        <end position="311"/>
    </location>
</feature>
<feature type="modified residue" description="Phosphoserine" evidence="4">
    <location>
        <position position="173"/>
    </location>
</feature>
<name>SPF30_SCHPO</name>